<dbReference type="EC" id="5.4.99.12" evidence="1"/>
<dbReference type="EMBL" id="CP000444">
    <property type="protein sequence ID" value="ABI42490.1"/>
    <property type="molecule type" value="Genomic_DNA"/>
</dbReference>
<dbReference type="SMR" id="Q0HWL5"/>
<dbReference type="KEGG" id="shm:Shewmr7_1491"/>
<dbReference type="HOGENOM" id="CLU_014673_0_2_6"/>
<dbReference type="GO" id="GO:0003723">
    <property type="term" value="F:RNA binding"/>
    <property type="evidence" value="ECO:0007669"/>
    <property type="project" value="InterPro"/>
</dbReference>
<dbReference type="GO" id="GO:0160147">
    <property type="term" value="F:tRNA pseudouridine(38-40) synthase activity"/>
    <property type="evidence" value="ECO:0007669"/>
    <property type="project" value="UniProtKB-EC"/>
</dbReference>
<dbReference type="GO" id="GO:0031119">
    <property type="term" value="P:tRNA pseudouridine synthesis"/>
    <property type="evidence" value="ECO:0007669"/>
    <property type="project" value="UniProtKB-UniRule"/>
</dbReference>
<dbReference type="CDD" id="cd02570">
    <property type="entry name" value="PseudoU_synth_EcTruA"/>
    <property type="match status" value="1"/>
</dbReference>
<dbReference type="FunFam" id="3.30.70.580:FF:000001">
    <property type="entry name" value="tRNA pseudouridine synthase A"/>
    <property type="match status" value="1"/>
</dbReference>
<dbReference type="FunFam" id="3.30.70.660:FF:000001">
    <property type="entry name" value="tRNA pseudouridine synthase A"/>
    <property type="match status" value="1"/>
</dbReference>
<dbReference type="Gene3D" id="3.30.70.660">
    <property type="entry name" value="Pseudouridine synthase I, catalytic domain, C-terminal subdomain"/>
    <property type="match status" value="1"/>
</dbReference>
<dbReference type="Gene3D" id="3.30.70.580">
    <property type="entry name" value="Pseudouridine synthase I, catalytic domain, N-terminal subdomain"/>
    <property type="match status" value="1"/>
</dbReference>
<dbReference type="HAMAP" id="MF_00171">
    <property type="entry name" value="TruA"/>
    <property type="match status" value="1"/>
</dbReference>
<dbReference type="InterPro" id="IPR020103">
    <property type="entry name" value="PsdUridine_synth_cat_dom_sf"/>
</dbReference>
<dbReference type="InterPro" id="IPR001406">
    <property type="entry name" value="PsdUridine_synth_TruA"/>
</dbReference>
<dbReference type="InterPro" id="IPR020097">
    <property type="entry name" value="PsdUridine_synth_TruA_a/b_dom"/>
</dbReference>
<dbReference type="InterPro" id="IPR020095">
    <property type="entry name" value="PsdUridine_synth_TruA_C"/>
</dbReference>
<dbReference type="InterPro" id="IPR020094">
    <property type="entry name" value="TruA/RsuA/RluB/E/F_N"/>
</dbReference>
<dbReference type="NCBIfam" id="TIGR00071">
    <property type="entry name" value="hisT_truA"/>
    <property type="match status" value="1"/>
</dbReference>
<dbReference type="PANTHER" id="PTHR11142">
    <property type="entry name" value="PSEUDOURIDYLATE SYNTHASE"/>
    <property type="match status" value="1"/>
</dbReference>
<dbReference type="PANTHER" id="PTHR11142:SF0">
    <property type="entry name" value="TRNA PSEUDOURIDINE SYNTHASE-LIKE 1"/>
    <property type="match status" value="1"/>
</dbReference>
<dbReference type="Pfam" id="PF01416">
    <property type="entry name" value="PseudoU_synth_1"/>
    <property type="match status" value="2"/>
</dbReference>
<dbReference type="PIRSF" id="PIRSF001430">
    <property type="entry name" value="tRNA_psdUrid_synth"/>
    <property type="match status" value="1"/>
</dbReference>
<dbReference type="SUPFAM" id="SSF55120">
    <property type="entry name" value="Pseudouridine synthase"/>
    <property type="match status" value="1"/>
</dbReference>
<accession>Q0HWL5</accession>
<sequence length="261" mass="29079">MRIALGIEYDGSGYFGWQRQAEVDSVQGQLEQALSKVANEPISLFCAGRTDAGVHATGQVVHFETNAIRNEGAWTLGVNANLPDNIAVRWAKEVDDSFHARFSATARRYRYVIYNHNFRPGILRHGVSHYHGDIDADKMHVAAQALLGEQDFTSFRAIQCQSKTPFRNVHSVKVTRQGMYVIVDISANAFLHHMVRNIVGSLLEIGLGNQPLTWMADLLALKDRNQAAATAKPNGLYLVDVTYPEQYQLPKLALGPLFMLD</sequence>
<proteinExistence type="inferred from homology"/>
<comment type="function">
    <text evidence="1">Formation of pseudouridine at positions 38, 39 and 40 in the anticodon stem and loop of transfer RNAs.</text>
</comment>
<comment type="catalytic activity">
    <reaction evidence="1">
        <text>uridine(38/39/40) in tRNA = pseudouridine(38/39/40) in tRNA</text>
        <dbReference type="Rhea" id="RHEA:22376"/>
        <dbReference type="Rhea" id="RHEA-COMP:10085"/>
        <dbReference type="Rhea" id="RHEA-COMP:10087"/>
        <dbReference type="ChEBI" id="CHEBI:65314"/>
        <dbReference type="ChEBI" id="CHEBI:65315"/>
        <dbReference type="EC" id="5.4.99.12"/>
    </reaction>
</comment>
<comment type="subunit">
    <text evidence="1">Homodimer.</text>
</comment>
<comment type="similarity">
    <text evidence="1">Belongs to the tRNA pseudouridine synthase TruA family.</text>
</comment>
<gene>
    <name evidence="1" type="primary">truA</name>
    <name type="ordered locus">Shewmr7_1491</name>
</gene>
<keyword id="KW-0413">Isomerase</keyword>
<keyword id="KW-0819">tRNA processing</keyword>
<organism>
    <name type="scientific">Shewanella sp. (strain MR-7)</name>
    <dbReference type="NCBI Taxonomy" id="60481"/>
    <lineage>
        <taxon>Bacteria</taxon>
        <taxon>Pseudomonadati</taxon>
        <taxon>Pseudomonadota</taxon>
        <taxon>Gammaproteobacteria</taxon>
        <taxon>Alteromonadales</taxon>
        <taxon>Shewanellaceae</taxon>
        <taxon>Shewanella</taxon>
    </lineage>
</organism>
<evidence type="ECO:0000255" key="1">
    <source>
        <dbReference type="HAMAP-Rule" id="MF_00171"/>
    </source>
</evidence>
<reference key="1">
    <citation type="submission" date="2006-08" db="EMBL/GenBank/DDBJ databases">
        <title>Complete sequence of chromosome 1 of Shewanella sp. MR-7.</title>
        <authorList>
            <person name="Copeland A."/>
            <person name="Lucas S."/>
            <person name="Lapidus A."/>
            <person name="Barry K."/>
            <person name="Detter J.C."/>
            <person name="Glavina del Rio T."/>
            <person name="Hammon N."/>
            <person name="Israni S."/>
            <person name="Dalin E."/>
            <person name="Tice H."/>
            <person name="Pitluck S."/>
            <person name="Kiss H."/>
            <person name="Brettin T."/>
            <person name="Bruce D."/>
            <person name="Han C."/>
            <person name="Tapia R."/>
            <person name="Gilna P."/>
            <person name="Schmutz J."/>
            <person name="Larimer F."/>
            <person name="Land M."/>
            <person name="Hauser L."/>
            <person name="Kyrpides N."/>
            <person name="Mikhailova N."/>
            <person name="Nealson K."/>
            <person name="Konstantinidis K."/>
            <person name="Klappenbach J."/>
            <person name="Tiedje J."/>
            <person name="Richardson P."/>
        </authorList>
    </citation>
    <scope>NUCLEOTIDE SEQUENCE [LARGE SCALE GENOMIC DNA]</scope>
    <source>
        <strain>MR-7</strain>
    </source>
</reference>
<name>TRUA_SHESR</name>
<feature type="chain" id="PRO_1000017173" description="tRNA pseudouridine synthase A">
    <location>
        <begin position="1"/>
        <end position="261"/>
    </location>
</feature>
<feature type="active site" description="Nucleophile" evidence="1">
    <location>
        <position position="51"/>
    </location>
</feature>
<feature type="binding site" evidence="1">
    <location>
        <position position="109"/>
    </location>
    <ligand>
        <name>substrate</name>
    </ligand>
</feature>
<protein>
    <recommendedName>
        <fullName evidence="1">tRNA pseudouridine synthase A</fullName>
        <ecNumber evidence="1">5.4.99.12</ecNumber>
    </recommendedName>
    <alternativeName>
        <fullName evidence="1">tRNA pseudouridine(38-40) synthase</fullName>
    </alternativeName>
    <alternativeName>
        <fullName evidence="1">tRNA pseudouridylate synthase I</fullName>
    </alternativeName>
    <alternativeName>
        <fullName evidence="1">tRNA-uridine isomerase I</fullName>
    </alternativeName>
</protein>